<sequence length="696" mass="75944">MATEFTGVWGRDSITLETGKWAKQAHGSVVYKTGNLVLLATVCAAEEPKEGQDFFPLTCEYTEKAYSVGRFPGGYFKREAKPAEHEVLLSRILDRPIRPMFPEGYFSEVQLLVQVLSADKQVSVQGHAINAASAALSVSSIPFAGPIAGARIGRIGGEFILNPTNEEITKSDLDLVVAGTKDAIVMIEGEASEISKEDMMAALRFAQEQLKFAVAMQEELAKKHGTVKKEVVLKAPDKDLHAKIREFAFDRLTLANKNADKAKRNDDIKAINKETVEHFKTLLAPEDKTKDIKHFLHELEYEVVRELVLGEGIRFDGRKTDEIRQISCEIDVLPGPHGSAVFTRGQTQSLGVMTLGTTSDNQRYETLEGSKEKNFMLHYNFPAFSVGEVRRNSGPGRREIGHGNLAERAIKKVLPTQTEFPYVIRLVSEILESNGSSSMASVCSGTLALMAGGVPISGAVSGIAMGLFSDEKGRFAVLSDIAGIEDHFGDMDFKLAGTKKGITAFQMDLKVNGLGLEVLQKAIEQAEVGRDHILGEMNKAISSVKGNLSENAPRITQKQIPKDRIGELIGPGGKMIRAIIEQSGSEISVDDSGKVTIASPSEESKEKAIAMIDGIFEEIEVGKIYDGVIKRIADFGAFVEILPGKEGLCHISKLDVKRVQSVRDIVSEGDKIKVKVISVDKMGKIDLSRKDVLLDN</sequence>
<gene>
    <name evidence="1" type="primary">pnp</name>
    <name type="ordered locus">LEPBI_I1529</name>
</gene>
<organism>
    <name type="scientific">Leptospira biflexa serovar Patoc (strain Patoc 1 / ATCC 23582 / Paris)</name>
    <dbReference type="NCBI Taxonomy" id="456481"/>
    <lineage>
        <taxon>Bacteria</taxon>
        <taxon>Pseudomonadati</taxon>
        <taxon>Spirochaetota</taxon>
        <taxon>Spirochaetia</taxon>
        <taxon>Leptospirales</taxon>
        <taxon>Leptospiraceae</taxon>
        <taxon>Leptospira</taxon>
    </lineage>
</organism>
<keyword id="KW-0963">Cytoplasm</keyword>
<keyword id="KW-0460">Magnesium</keyword>
<keyword id="KW-0479">Metal-binding</keyword>
<keyword id="KW-0548">Nucleotidyltransferase</keyword>
<keyword id="KW-1185">Reference proteome</keyword>
<keyword id="KW-0694">RNA-binding</keyword>
<keyword id="KW-0808">Transferase</keyword>
<protein>
    <recommendedName>
        <fullName evidence="1">Polyribonucleotide nucleotidyltransferase</fullName>
        <ecNumber evidence="1">2.7.7.8</ecNumber>
    </recommendedName>
    <alternativeName>
        <fullName evidence="1">Polynucleotide phosphorylase</fullName>
        <shortName evidence="1">PNPase</shortName>
    </alternativeName>
</protein>
<comment type="function">
    <text evidence="1">Involved in mRNA degradation. Catalyzes the phosphorolysis of single-stranded polyribonucleotides processively in the 3'- to 5'-direction.</text>
</comment>
<comment type="catalytic activity">
    <reaction evidence="1">
        <text>RNA(n+1) + phosphate = RNA(n) + a ribonucleoside 5'-diphosphate</text>
        <dbReference type="Rhea" id="RHEA:22096"/>
        <dbReference type="Rhea" id="RHEA-COMP:14527"/>
        <dbReference type="Rhea" id="RHEA-COMP:17342"/>
        <dbReference type="ChEBI" id="CHEBI:43474"/>
        <dbReference type="ChEBI" id="CHEBI:57930"/>
        <dbReference type="ChEBI" id="CHEBI:140395"/>
        <dbReference type="EC" id="2.7.7.8"/>
    </reaction>
</comment>
<comment type="cofactor">
    <cofactor evidence="1">
        <name>Mg(2+)</name>
        <dbReference type="ChEBI" id="CHEBI:18420"/>
    </cofactor>
</comment>
<comment type="subcellular location">
    <subcellularLocation>
        <location evidence="1">Cytoplasm</location>
    </subcellularLocation>
</comment>
<comment type="similarity">
    <text evidence="1">Belongs to the polyribonucleotide nucleotidyltransferase family.</text>
</comment>
<dbReference type="EC" id="2.7.7.8" evidence="1"/>
<dbReference type="EMBL" id="CP000786">
    <property type="protein sequence ID" value="ABZ97636.1"/>
    <property type="molecule type" value="Genomic_DNA"/>
</dbReference>
<dbReference type="RefSeq" id="WP_012388515.1">
    <property type="nucleotide sequence ID" value="NC_010602.1"/>
</dbReference>
<dbReference type="SMR" id="B0SQH8"/>
<dbReference type="STRING" id="456481.LEPBI_I1529"/>
<dbReference type="KEGG" id="lbi:LEPBI_I1529"/>
<dbReference type="HOGENOM" id="CLU_004217_2_2_12"/>
<dbReference type="OrthoDB" id="9804305at2"/>
<dbReference type="BioCyc" id="LBIF456481:LEPBI_RS07525-MONOMER"/>
<dbReference type="Proteomes" id="UP000001847">
    <property type="component" value="Chromosome I"/>
</dbReference>
<dbReference type="GO" id="GO:0005829">
    <property type="term" value="C:cytosol"/>
    <property type="evidence" value="ECO:0007669"/>
    <property type="project" value="TreeGrafter"/>
</dbReference>
<dbReference type="GO" id="GO:0000175">
    <property type="term" value="F:3'-5'-RNA exonuclease activity"/>
    <property type="evidence" value="ECO:0007669"/>
    <property type="project" value="TreeGrafter"/>
</dbReference>
<dbReference type="GO" id="GO:0000287">
    <property type="term" value="F:magnesium ion binding"/>
    <property type="evidence" value="ECO:0007669"/>
    <property type="project" value="UniProtKB-UniRule"/>
</dbReference>
<dbReference type="GO" id="GO:0004654">
    <property type="term" value="F:polyribonucleotide nucleotidyltransferase activity"/>
    <property type="evidence" value="ECO:0007669"/>
    <property type="project" value="UniProtKB-UniRule"/>
</dbReference>
<dbReference type="GO" id="GO:0003723">
    <property type="term" value="F:RNA binding"/>
    <property type="evidence" value="ECO:0007669"/>
    <property type="project" value="UniProtKB-UniRule"/>
</dbReference>
<dbReference type="GO" id="GO:0006402">
    <property type="term" value="P:mRNA catabolic process"/>
    <property type="evidence" value="ECO:0007669"/>
    <property type="project" value="UniProtKB-UniRule"/>
</dbReference>
<dbReference type="GO" id="GO:0006396">
    <property type="term" value="P:RNA processing"/>
    <property type="evidence" value="ECO:0007669"/>
    <property type="project" value="InterPro"/>
</dbReference>
<dbReference type="CDD" id="cd02393">
    <property type="entry name" value="KH-I_PNPase"/>
    <property type="match status" value="1"/>
</dbReference>
<dbReference type="CDD" id="cd11364">
    <property type="entry name" value="RNase_PH_PNPase_2"/>
    <property type="match status" value="1"/>
</dbReference>
<dbReference type="CDD" id="cd04472">
    <property type="entry name" value="S1_PNPase"/>
    <property type="match status" value="1"/>
</dbReference>
<dbReference type="FunFam" id="3.30.1370.10:FF:000001">
    <property type="entry name" value="Polyribonucleotide nucleotidyltransferase"/>
    <property type="match status" value="1"/>
</dbReference>
<dbReference type="FunFam" id="3.30.230.70:FF:000001">
    <property type="entry name" value="Polyribonucleotide nucleotidyltransferase"/>
    <property type="match status" value="1"/>
</dbReference>
<dbReference type="FunFam" id="3.30.230.70:FF:000002">
    <property type="entry name" value="Polyribonucleotide nucleotidyltransferase"/>
    <property type="match status" value="1"/>
</dbReference>
<dbReference type="FunFam" id="2.40.50.140:FF:000189">
    <property type="entry name" value="Polyribonucleotide nucleotidyltransferase, putative"/>
    <property type="match status" value="1"/>
</dbReference>
<dbReference type="Gene3D" id="3.30.230.70">
    <property type="entry name" value="GHMP Kinase, N-terminal domain"/>
    <property type="match status" value="2"/>
</dbReference>
<dbReference type="Gene3D" id="3.30.1370.10">
    <property type="entry name" value="K Homology domain, type 1"/>
    <property type="match status" value="1"/>
</dbReference>
<dbReference type="Gene3D" id="2.40.50.140">
    <property type="entry name" value="Nucleic acid-binding proteins"/>
    <property type="match status" value="1"/>
</dbReference>
<dbReference type="HAMAP" id="MF_01595">
    <property type="entry name" value="PNPase"/>
    <property type="match status" value="1"/>
</dbReference>
<dbReference type="InterPro" id="IPR001247">
    <property type="entry name" value="ExoRNase_PH_dom1"/>
</dbReference>
<dbReference type="InterPro" id="IPR015847">
    <property type="entry name" value="ExoRNase_PH_dom2"/>
</dbReference>
<dbReference type="InterPro" id="IPR036345">
    <property type="entry name" value="ExoRNase_PH_dom2_sf"/>
</dbReference>
<dbReference type="InterPro" id="IPR004087">
    <property type="entry name" value="KH_dom"/>
</dbReference>
<dbReference type="InterPro" id="IPR004088">
    <property type="entry name" value="KH_dom_type_1"/>
</dbReference>
<dbReference type="InterPro" id="IPR036612">
    <property type="entry name" value="KH_dom_type_1_sf"/>
</dbReference>
<dbReference type="InterPro" id="IPR012340">
    <property type="entry name" value="NA-bd_OB-fold"/>
</dbReference>
<dbReference type="InterPro" id="IPR012162">
    <property type="entry name" value="PNPase"/>
</dbReference>
<dbReference type="InterPro" id="IPR027408">
    <property type="entry name" value="PNPase/RNase_PH_dom_sf"/>
</dbReference>
<dbReference type="InterPro" id="IPR015848">
    <property type="entry name" value="PNPase_PH_RNA-bd_bac/org-type"/>
</dbReference>
<dbReference type="InterPro" id="IPR036456">
    <property type="entry name" value="PNPase_PH_RNA-bd_sf"/>
</dbReference>
<dbReference type="InterPro" id="IPR020568">
    <property type="entry name" value="Ribosomal_Su5_D2-typ_SF"/>
</dbReference>
<dbReference type="InterPro" id="IPR003029">
    <property type="entry name" value="S1_domain"/>
</dbReference>
<dbReference type="NCBIfam" id="TIGR03591">
    <property type="entry name" value="polynuc_phos"/>
    <property type="match status" value="1"/>
</dbReference>
<dbReference type="NCBIfam" id="NF008805">
    <property type="entry name" value="PRK11824.1"/>
    <property type="match status" value="1"/>
</dbReference>
<dbReference type="PANTHER" id="PTHR11252">
    <property type="entry name" value="POLYRIBONUCLEOTIDE NUCLEOTIDYLTRANSFERASE"/>
    <property type="match status" value="1"/>
</dbReference>
<dbReference type="PANTHER" id="PTHR11252:SF0">
    <property type="entry name" value="POLYRIBONUCLEOTIDE NUCLEOTIDYLTRANSFERASE 1, MITOCHONDRIAL"/>
    <property type="match status" value="1"/>
</dbReference>
<dbReference type="Pfam" id="PF00013">
    <property type="entry name" value="KH_1"/>
    <property type="match status" value="1"/>
</dbReference>
<dbReference type="Pfam" id="PF03726">
    <property type="entry name" value="PNPase"/>
    <property type="match status" value="1"/>
</dbReference>
<dbReference type="Pfam" id="PF01138">
    <property type="entry name" value="RNase_PH"/>
    <property type="match status" value="2"/>
</dbReference>
<dbReference type="Pfam" id="PF03725">
    <property type="entry name" value="RNase_PH_C"/>
    <property type="match status" value="1"/>
</dbReference>
<dbReference type="Pfam" id="PF00575">
    <property type="entry name" value="S1"/>
    <property type="match status" value="1"/>
</dbReference>
<dbReference type="PIRSF" id="PIRSF005499">
    <property type="entry name" value="PNPase"/>
    <property type="match status" value="1"/>
</dbReference>
<dbReference type="SMART" id="SM00322">
    <property type="entry name" value="KH"/>
    <property type="match status" value="1"/>
</dbReference>
<dbReference type="SMART" id="SM00316">
    <property type="entry name" value="S1"/>
    <property type="match status" value="1"/>
</dbReference>
<dbReference type="SUPFAM" id="SSF54791">
    <property type="entry name" value="Eukaryotic type KH-domain (KH-domain type I)"/>
    <property type="match status" value="1"/>
</dbReference>
<dbReference type="SUPFAM" id="SSF50249">
    <property type="entry name" value="Nucleic acid-binding proteins"/>
    <property type="match status" value="1"/>
</dbReference>
<dbReference type="SUPFAM" id="SSF46915">
    <property type="entry name" value="Polynucleotide phosphorylase/guanosine pentaphosphate synthase (PNPase/GPSI), domain 3"/>
    <property type="match status" value="1"/>
</dbReference>
<dbReference type="SUPFAM" id="SSF55666">
    <property type="entry name" value="Ribonuclease PH domain 2-like"/>
    <property type="match status" value="2"/>
</dbReference>
<dbReference type="SUPFAM" id="SSF54211">
    <property type="entry name" value="Ribosomal protein S5 domain 2-like"/>
    <property type="match status" value="2"/>
</dbReference>
<dbReference type="PROSITE" id="PS50084">
    <property type="entry name" value="KH_TYPE_1"/>
    <property type="match status" value="1"/>
</dbReference>
<dbReference type="PROSITE" id="PS50126">
    <property type="entry name" value="S1"/>
    <property type="match status" value="1"/>
</dbReference>
<proteinExistence type="inferred from homology"/>
<accession>B0SQH8</accession>
<feature type="chain" id="PRO_1000147927" description="Polyribonucleotide nucleotidyltransferase">
    <location>
        <begin position="1"/>
        <end position="696"/>
    </location>
</feature>
<feature type="domain" description="KH" evidence="1">
    <location>
        <begin position="553"/>
        <end position="612"/>
    </location>
</feature>
<feature type="domain" description="S1 motif" evidence="1">
    <location>
        <begin position="622"/>
        <end position="690"/>
    </location>
</feature>
<feature type="binding site" evidence="1">
    <location>
        <position position="486"/>
    </location>
    <ligand>
        <name>Mg(2+)</name>
        <dbReference type="ChEBI" id="CHEBI:18420"/>
    </ligand>
</feature>
<feature type="binding site" evidence="1">
    <location>
        <position position="492"/>
    </location>
    <ligand>
        <name>Mg(2+)</name>
        <dbReference type="ChEBI" id="CHEBI:18420"/>
    </ligand>
</feature>
<name>PNP_LEPBP</name>
<evidence type="ECO:0000255" key="1">
    <source>
        <dbReference type="HAMAP-Rule" id="MF_01595"/>
    </source>
</evidence>
<reference key="1">
    <citation type="journal article" date="2008" name="PLoS ONE">
        <title>Genome sequence of the saprophyte Leptospira biflexa provides insights into the evolution of Leptospira and the pathogenesis of leptospirosis.</title>
        <authorList>
            <person name="Picardeau M."/>
            <person name="Bulach D.M."/>
            <person name="Bouchier C."/>
            <person name="Zuerner R.L."/>
            <person name="Zidane N."/>
            <person name="Wilson P.J."/>
            <person name="Creno S."/>
            <person name="Kuczek E.S."/>
            <person name="Bommezzadri S."/>
            <person name="Davis J.C."/>
            <person name="McGrath A."/>
            <person name="Johnson M.J."/>
            <person name="Boursaux-Eude C."/>
            <person name="Seemann T."/>
            <person name="Rouy Z."/>
            <person name="Coppel R.L."/>
            <person name="Rood J.I."/>
            <person name="Lajus A."/>
            <person name="Davies J.K."/>
            <person name="Medigue C."/>
            <person name="Adler B."/>
        </authorList>
    </citation>
    <scope>NUCLEOTIDE SEQUENCE [LARGE SCALE GENOMIC DNA]</scope>
    <source>
        <strain>Patoc 1 / ATCC 23582 / Paris</strain>
    </source>
</reference>